<evidence type="ECO:0000255" key="1">
    <source>
        <dbReference type="HAMAP-Rule" id="MF_00090"/>
    </source>
</evidence>
<name>PIMT_YERPN</name>
<feature type="chain" id="PRO_1000004833" description="Protein-L-isoaspartate O-methyltransferase">
    <location>
        <begin position="1"/>
        <end position="208"/>
    </location>
</feature>
<feature type="active site" evidence="1">
    <location>
        <position position="59"/>
    </location>
</feature>
<proteinExistence type="inferred from homology"/>
<dbReference type="EC" id="2.1.1.77" evidence="1"/>
<dbReference type="EMBL" id="CP000305">
    <property type="protein sequence ID" value="ABG17068.1"/>
    <property type="molecule type" value="Genomic_DNA"/>
</dbReference>
<dbReference type="EMBL" id="ACNQ01000007">
    <property type="protein sequence ID" value="EEO77932.1"/>
    <property type="molecule type" value="Genomic_DNA"/>
</dbReference>
<dbReference type="RefSeq" id="WP_002209395.1">
    <property type="nucleotide sequence ID" value="NZ_ACNQ01000007.1"/>
</dbReference>
<dbReference type="SMR" id="Q1CLR2"/>
<dbReference type="KEGG" id="ypn:YPN_0736"/>
<dbReference type="HOGENOM" id="CLU_055432_2_0_6"/>
<dbReference type="Proteomes" id="UP000008936">
    <property type="component" value="Chromosome"/>
</dbReference>
<dbReference type="GO" id="GO:0005737">
    <property type="term" value="C:cytoplasm"/>
    <property type="evidence" value="ECO:0007669"/>
    <property type="project" value="UniProtKB-SubCell"/>
</dbReference>
<dbReference type="GO" id="GO:0004719">
    <property type="term" value="F:protein-L-isoaspartate (D-aspartate) O-methyltransferase activity"/>
    <property type="evidence" value="ECO:0007669"/>
    <property type="project" value="UniProtKB-UniRule"/>
</dbReference>
<dbReference type="GO" id="GO:0032259">
    <property type="term" value="P:methylation"/>
    <property type="evidence" value="ECO:0007669"/>
    <property type="project" value="UniProtKB-KW"/>
</dbReference>
<dbReference type="GO" id="GO:0036211">
    <property type="term" value="P:protein modification process"/>
    <property type="evidence" value="ECO:0007669"/>
    <property type="project" value="UniProtKB-UniRule"/>
</dbReference>
<dbReference type="GO" id="GO:0030091">
    <property type="term" value="P:protein repair"/>
    <property type="evidence" value="ECO:0007669"/>
    <property type="project" value="UniProtKB-UniRule"/>
</dbReference>
<dbReference type="CDD" id="cd02440">
    <property type="entry name" value="AdoMet_MTases"/>
    <property type="match status" value="1"/>
</dbReference>
<dbReference type="FunFam" id="3.40.50.150:FF:000010">
    <property type="entry name" value="Protein-L-isoaspartate O-methyltransferase"/>
    <property type="match status" value="1"/>
</dbReference>
<dbReference type="Gene3D" id="3.40.50.150">
    <property type="entry name" value="Vaccinia Virus protein VP39"/>
    <property type="match status" value="1"/>
</dbReference>
<dbReference type="HAMAP" id="MF_00090">
    <property type="entry name" value="PIMT"/>
    <property type="match status" value="1"/>
</dbReference>
<dbReference type="InterPro" id="IPR000682">
    <property type="entry name" value="PCMT"/>
</dbReference>
<dbReference type="InterPro" id="IPR029063">
    <property type="entry name" value="SAM-dependent_MTases_sf"/>
</dbReference>
<dbReference type="NCBIfam" id="TIGR00080">
    <property type="entry name" value="pimt"/>
    <property type="match status" value="1"/>
</dbReference>
<dbReference type="NCBIfam" id="NF001453">
    <property type="entry name" value="PRK00312.1"/>
    <property type="match status" value="1"/>
</dbReference>
<dbReference type="PANTHER" id="PTHR11579">
    <property type="entry name" value="PROTEIN-L-ISOASPARTATE O-METHYLTRANSFERASE"/>
    <property type="match status" value="1"/>
</dbReference>
<dbReference type="PANTHER" id="PTHR11579:SF0">
    <property type="entry name" value="PROTEIN-L-ISOASPARTATE(D-ASPARTATE) O-METHYLTRANSFERASE"/>
    <property type="match status" value="1"/>
</dbReference>
<dbReference type="Pfam" id="PF01135">
    <property type="entry name" value="PCMT"/>
    <property type="match status" value="1"/>
</dbReference>
<dbReference type="SUPFAM" id="SSF53335">
    <property type="entry name" value="S-adenosyl-L-methionine-dependent methyltransferases"/>
    <property type="match status" value="1"/>
</dbReference>
<dbReference type="PROSITE" id="PS01279">
    <property type="entry name" value="PCMT"/>
    <property type="match status" value="1"/>
</dbReference>
<sequence>MVNKRMQTLLMQLRQQGIHDERLLQAIEAVPRERFVDEALAHKAYENTALPIGAGQTISQPYMVARMTELLQLTPTSRVLEIGTGSGYQTAILAHLVDHVCSVERIKGLQWQAKRRLKQLDLHNVSTRHGDGWLGWQSRGPFDAIIVTAAPPEIPDALLEQLDEGGILVLPVGEQFQTLKYVQRRNNEYHIETVEAVRFVPLVKGELA</sequence>
<protein>
    <recommendedName>
        <fullName evidence="1">Protein-L-isoaspartate O-methyltransferase</fullName>
        <ecNumber evidence="1">2.1.1.77</ecNumber>
    </recommendedName>
    <alternativeName>
        <fullName evidence="1">L-isoaspartyl protein carboxyl methyltransferase</fullName>
    </alternativeName>
    <alternativeName>
        <fullName evidence="1">Protein L-isoaspartyl methyltransferase</fullName>
    </alternativeName>
    <alternativeName>
        <fullName evidence="1">Protein-beta-aspartate methyltransferase</fullName>
        <shortName evidence="1">PIMT</shortName>
    </alternativeName>
</protein>
<comment type="function">
    <text evidence="1">Catalyzes the methyl esterification of L-isoaspartyl residues in peptides and proteins that result from spontaneous decomposition of normal L-aspartyl and L-asparaginyl residues. It plays a role in the repair and/or degradation of damaged proteins.</text>
</comment>
<comment type="catalytic activity">
    <reaction evidence="1">
        <text>[protein]-L-isoaspartate + S-adenosyl-L-methionine = [protein]-L-isoaspartate alpha-methyl ester + S-adenosyl-L-homocysteine</text>
        <dbReference type="Rhea" id="RHEA:12705"/>
        <dbReference type="Rhea" id="RHEA-COMP:12143"/>
        <dbReference type="Rhea" id="RHEA-COMP:12144"/>
        <dbReference type="ChEBI" id="CHEBI:57856"/>
        <dbReference type="ChEBI" id="CHEBI:59789"/>
        <dbReference type="ChEBI" id="CHEBI:90596"/>
        <dbReference type="ChEBI" id="CHEBI:90598"/>
        <dbReference type="EC" id="2.1.1.77"/>
    </reaction>
</comment>
<comment type="subcellular location">
    <subcellularLocation>
        <location evidence="1">Cytoplasm</location>
    </subcellularLocation>
</comment>
<comment type="similarity">
    <text evidence="1">Belongs to the methyltransferase superfamily. L-isoaspartyl/D-aspartyl protein methyltransferase family.</text>
</comment>
<gene>
    <name evidence="1" type="primary">pcm</name>
    <name type="ordered locus">YPN_0736</name>
    <name type="ORF">YP516_0784</name>
</gene>
<reference key="1">
    <citation type="journal article" date="2006" name="J. Bacteriol.">
        <title>Complete genome sequence of Yersinia pestis strains Antiqua and Nepal516: evidence of gene reduction in an emerging pathogen.</title>
        <authorList>
            <person name="Chain P.S.G."/>
            <person name="Hu P."/>
            <person name="Malfatti S.A."/>
            <person name="Radnedge L."/>
            <person name="Larimer F."/>
            <person name="Vergez L.M."/>
            <person name="Worsham P."/>
            <person name="Chu M.C."/>
            <person name="Andersen G.L."/>
        </authorList>
    </citation>
    <scope>NUCLEOTIDE SEQUENCE [LARGE SCALE GENOMIC DNA]</scope>
    <source>
        <strain>Nepal516</strain>
    </source>
</reference>
<reference key="2">
    <citation type="submission" date="2009-04" db="EMBL/GenBank/DDBJ databases">
        <title>Yersinia pestis Nepal516A whole genome shotgun sequencing project.</title>
        <authorList>
            <person name="Plunkett G. III"/>
            <person name="Anderson B.D."/>
            <person name="Baumler D.J."/>
            <person name="Burland V."/>
            <person name="Cabot E.L."/>
            <person name="Glasner J.D."/>
            <person name="Mau B."/>
            <person name="Neeno-Eckwall E."/>
            <person name="Perna N.T."/>
            <person name="Munk A.C."/>
            <person name="Tapia R."/>
            <person name="Green L.D."/>
            <person name="Rogers Y.C."/>
            <person name="Detter J.C."/>
            <person name="Bruce D.C."/>
            <person name="Brettin T.S."/>
        </authorList>
    </citation>
    <scope>NUCLEOTIDE SEQUENCE [LARGE SCALE GENOMIC DNA]</scope>
    <source>
        <strain>Nepal516</strain>
    </source>
</reference>
<keyword id="KW-0963">Cytoplasm</keyword>
<keyword id="KW-0489">Methyltransferase</keyword>
<keyword id="KW-0949">S-adenosyl-L-methionine</keyword>
<keyword id="KW-0808">Transferase</keyword>
<accession>Q1CLR2</accession>
<accession>C4GPS6</accession>
<organism>
    <name type="scientific">Yersinia pestis bv. Antiqua (strain Nepal516)</name>
    <dbReference type="NCBI Taxonomy" id="377628"/>
    <lineage>
        <taxon>Bacteria</taxon>
        <taxon>Pseudomonadati</taxon>
        <taxon>Pseudomonadota</taxon>
        <taxon>Gammaproteobacteria</taxon>
        <taxon>Enterobacterales</taxon>
        <taxon>Yersiniaceae</taxon>
        <taxon>Yersinia</taxon>
    </lineage>
</organism>